<organism>
    <name type="scientific">Escherichia coli O157:H7</name>
    <dbReference type="NCBI Taxonomy" id="83334"/>
    <lineage>
        <taxon>Bacteria</taxon>
        <taxon>Pseudomonadati</taxon>
        <taxon>Pseudomonadota</taxon>
        <taxon>Gammaproteobacteria</taxon>
        <taxon>Enterobacterales</taxon>
        <taxon>Enterobacteriaceae</taxon>
        <taxon>Escherichia</taxon>
    </lineage>
</organism>
<protein>
    <recommendedName>
        <fullName>Mannose-1-phosphate guanylyltransferase 2</fullName>
        <ecNumber>2.7.7.13</ecNumber>
    </recommendedName>
    <alternativeName>
        <fullName>GDP-mannose pyrophosphorylase 2</fullName>
        <shortName>GMP 2</shortName>
        <shortName>GMPP 2</shortName>
    </alternativeName>
</protein>
<dbReference type="EC" id="2.7.7.13"/>
<dbReference type="EMBL" id="AF061251">
    <property type="protein sequence ID" value="AAC32348.1"/>
    <property type="molecule type" value="Genomic_DNA"/>
</dbReference>
<dbReference type="EMBL" id="AE005174">
    <property type="protein sequence ID" value="AAG57091.1"/>
    <property type="molecule type" value="Genomic_DNA"/>
</dbReference>
<dbReference type="EMBL" id="BA000007">
    <property type="protein sequence ID" value="BAB36259.1"/>
    <property type="molecule type" value="Genomic_DNA"/>
</dbReference>
<dbReference type="PIR" id="D90983">
    <property type="entry name" value="D90983"/>
</dbReference>
<dbReference type="PIR" id="G85828">
    <property type="entry name" value="G85828"/>
</dbReference>
<dbReference type="RefSeq" id="WP_001278239.1">
    <property type="nucleotide sequence ID" value="NZ_VOAI01000013.1"/>
</dbReference>
<dbReference type="SMR" id="O85342"/>
<dbReference type="STRING" id="155864.Z3195"/>
<dbReference type="KEGG" id="ece:Z3195"/>
<dbReference type="KEGG" id="ecs:ECs_2836"/>
<dbReference type="PATRIC" id="fig|386585.9.peg.2969"/>
<dbReference type="eggNOG" id="COG0662">
    <property type="taxonomic scope" value="Bacteria"/>
</dbReference>
<dbReference type="eggNOG" id="COG0836">
    <property type="taxonomic scope" value="Bacteria"/>
</dbReference>
<dbReference type="HOGENOM" id="CLU_035527_1_0_6"/>
<dbReference type="OMA" id="VTHINYR"/>
<dbReference type="UniPathway" id="UPA00126">
    <property type="reaction ID" value="UER00930"/>
</dbReference>
<dbReference type="Proteomes" id="UP000000558">
    <property type="component" value="Chromosome"/>
</dbReference>
<dbReference type="Proteomes" id="UP000002519">
    <property type="component" value="Chromosome"/>
</dbReference>
<dbReference type="GO" id="GO:0005525">
    <property type="term" value="F:GTP binding"/>
    <property type="evidence" value="ECO:0007669"/>
    <property type="project" value="UniProtKB-KW"/>
</dbReference>
<dbReference type="GO" id="GO:0004475">
    <property type="term" value="F:mannose-1-phosphate guanylyltransferase (GTP) activity"/>
    <property type="evidence" value="ECO:0007669"/>
    <property type="project" value="UniProtKB-EC"/>
</dbReference>
<dbReference type="GO" id="GO:0009298">
    <property type="term" value="P:GDP-mannose biosynthetic process"/>
    <property type="evidence" value="ECO:0007669"/>
    <property type="project" value="UniProtKB-UniPathway"/>
</dbReference>
<dbReference type="GO" id="GO:0009103">
    <property type="term" value="P:lipopolysaccharide biosynthetic process"/>
    <property type="evidence" value="ECO:0007669"/>
    <property type="project" value="UniProtKB-KW"/>
</dbReference>
<dbReference type="CDD" id="cd02213">
    <property type="entry name" value="cupin_PMI_typeII_C"/>
    <property type="match status" value="1"/>
</dbReference>
<dbReference type="CDD" id="cd02509">
    <property type="entry name" value="GDP-M1P_Guanylyltransferase"/>
    <property type="match status" value="1"/>
</dbReference>
<dbReference type="FunFam" id="3.90.550.10:FF:000046">
    <property type="entry name" value="Mannose-1-phosphate guanylyltransferase (GDP)"/>
    <property type="match status" value="1"/>
</dbReference>
<dbReference type="FunFam" id="2.60.120.10:FF:000032">
    <property type="entry name" value="Mannose-1-phosphate guanylyltransferase/mannose-6-phosphate isomerase"/>
    <property type="match status" value="1"/>
</dbReference>
<dbReference type="Gene3D" id="2.60.120.10">
    <property type="entry name" value="Jelly Rolls"/>
    <property type="match status" value="1"/>
</dbReference>
<dbReference type="Gene3D" id="3.90.550.10">
    <property type="entry name" value="Spore Coat Polysaccharide Biosynthesis Protein SpsA, Chain A"/>
    <property type="match status" value="1"/>
</dbReference>
<dbReference type="InterPro" id="IPR049577">
    <property type="entry name" value="GMPP_N"/>
</dbReference>
<dbReference type="InterPro" id="IPR006375">
    <property type="entry name" value="Man1P_GuaTrfase/Man6P_Isoase"/>
</dbReference>
<dbReference type="InterPro" id="IPR001538">
    <property type="entry name" value="Man6P_isomerase-2_C"/>
</dbReference>
<dbReference type="InterPro" id="IPR054566">
    <property type="entry name" value="ManC/GMP-like_b-helix"/>
</dbReference>
<dbReference type="InterPro" id="IPR051161">
    <property type="entry name" value="Mannose-6P_isomerase_type2"/>
</dbReference>
<dbReference type="InterPro" id="IPR005835">
    <property type="entry name" value="NTP_transferase_dom"/>
</dbReference>
<dbReference type="InterPro" id="IPR029044">
    <property type="entry name" value="Nucleotide-diphossugar_trans"/>
</dbReference>
<dbReference type="InterPro" id="IPR014710">
    <property type="entry name" value="RmlC-like_jellyroll"/>
</dbReference>
<dbReference type="InterPro" id="IPR011051">
    <property type="entry name" value="RmlC_Cupin_sf"/>
</dbReference>
<dbReference type="NCBIfam" id="TIGR01479">
    <property type="entry name" value="GMP_PMI"/>
    <property type="match status" value="1"/>
</dbReference>
<dbReference type="PANTHER" id="PTHR46390">
    <property type="entry name" value="MANNOSE-1-PHOSPHATE GUANYLYLTRANSFERASE"/>
    <property type="match status" value="1"/>
</dbReference>
<dbReference type="PANTHER" id="PTHR46390:SF1">
    <property type="entry name" value="MANNOSE-1-PHOSPHATE GUANYLYLTRANSFERASE"/>
    <property type="match status" value="1"/>
</dbReference>
<dbReference type="Pfam" id="PF22640">
    <property type="entry name" value="ManC_GMP_beta-helix"/>
    <property type="match status" value="1"/>
</dbReference>
<dbReference type="Pfam" id="PF01050">
    <property type="entry name" value="MannoseP_isomer"/>
    <property type="match status" value="1"/>
</dbReference>
<dbReference type="Pfam" id="PF00483">
    <property type="entry name" value="NTP_transferase"/>
    <property type="match status" value="1"/>
</dbReference>
<dbReference type="SUPFAM" id="SSF53448">
    <property type="entry name" value="Nucleotide-diphospho-sugar transferases"/>
    <property type="match status" value="1"/>
</dbReference>
<dbReference type="SUPFAM" id="SSF51182">
    <property type="entry name" value="RmlC-like cupins"/>
    <property type="match status" value="1"/>
</dbReference>
<reference key="1">
    <citation type="journal article" date="1998" name="Infect. Immun.">
        <title>Organization of Escherichia coli O157 O antigen gene cluster and identification of its specific genes.</title>
        <authorList>
            <person name="Wang L."/>
            <person name="Reeves P.R."/>
        </authorList>
    </citation>
    <scope>NUCLEOTIDE SEQUENCE [GENOMIC DNA]</scope>
    <scope>FUNCTION</scope>
    <source>
        <strain>O157:H7 / C664-1992 / EHEC</strain>
    </source>
</reference>
<reference key="2">
    <citation type="journal article" date="2001" name="Nature">
        <title>Genome sequence of enterohaemorrhagic Escherichia coli O157:H7.</title>
        <authorList>
            <person name="Perna N.T."/>
            <person name="Plunkett G. III"/>
            <person name="Burland V."/>
            <person name="Mau B."/>
            <person name="Glasner J.D."/>
            <person name="Rose D.J."/>
            <person name="Mayhew G.F."/>
            <person name="Evans P.S."/>
            <person name="Gregor J."/>
            <person name="Kirkpatrick H.A."/>
            <person name="Posfai G."/>
            <person name="Hackett J."/>
            <person name="Klink S."/>
            <person name="Boutin A."/>
            <person name="Shao Y."/>
            <person name="Miller L."/>
            <person name="Grotbeck E.J."/>
            <person name="Davis N.W."/>
            <person name="Lim A."/>
            <person name="Dimalanta E.T."/>
            <person name="Potamousis K."/>
            <person name="Apodaca J."/>
            <person name="Anantharaman T.S."/>
            <person name="Lin J."/>
            <person name="Yen G."/>
            <person name="Schwartz D.C."/>
            <person name="Welch R.A."/>
            <person name="Blattner F.R."/>
        </authorList>
    </citation>
    <scope>NUCLEOTIDE SEQUENCE [LARGE SCALE GENOMIC DNA]</scope>
    <source>
        <strain>O157:H7 / EDL933 / ATCC 700927 / EHEC</strain>
    </source>
</reference>
<reference key="3">
    <citation type="journal article" date="2001" name="DNA Res.">
        <title>Complete genome sequence of enterohemorrhagic Escherichia coli O157:H7 and genomic comparison with a laboratory strain K-12.</title>
        <authorList>
            <person name="Hayashi T."/>
            <person name="Makino K."/>
            <person name="Ohnishi M."/>
            <person name="Kurokawa K."/>
            <person name="Ishii K."/>
            <person name="Yokoyama K."/>
            <person name="Han C.-G."/>
            <person name="Ohtsubo E."/>
            <person name="Nakayama K."/>
            <person name="Murata T."/>
            <person name="Tanaka M."/>
            <person name="Tobe T."/>
            <person name="Iida T."/>
            <person name="Takami H."/>
            <person name="Honda T."/>
            <person name="Sasakawa C."/>
            <person name="Ogasawara N."/>
            <person name="Yasunaga T."/>
            <person name="Kuhara S."/>
            <person name="Shiba T."/>
            <person name="Hattori M."/>
            <person name="Shinagawa H."/>
        </authorList>
    </citation>
    <scope>NUCLEOTIDE SEQUENCE [LARGE SCALE GENOMIC DNA]</scope>
    <source>
        <strain>O157:H7 / Sakai / RIMD 0509952 / EHEC</strain>
    </source>
</reference>
<sequence>MSDAPIIAVVMAGGTGSRLWPLSRELYPKQFLQLSGDNTLLQTTLLRLSGLSCQKPLVITNEQHRFVVAEQLREINKLNGNIILEPCGRNTAPAIAISAFHALKRNPQEDPLLLVLAADHVIAKESVFCDAIKNATPIANQGKIVTFGIIPEYAETGYGYIERGELSVPLQGHENTGFYYVNKFVEKPNRETAELYMTSGNHYWNSGIFMFKASVYLEELRKFRPDIYNVCEQVASSSYIDLDFIRLSKEQFQDCPAESIDFAVMEKTEKCVVCPVDIGWSDVGSWQSLWDISLKSKTGDVCKGDILTYDTKNNYIYSESALVAAIGIEDMVIVQTKDAVLVSKKSDVQHVKKIVEMLKLQQRTEYISHREVFRPWGKFDSIDQGERYKVKKIIVKPGEGLSLRMHHHRSEHWIVLSGTAKVTLGDKTKLVTANESIYIPLGAAYSLENPGIIPLNLIEVSSGDYLGEDDIIRQKERYKHED</sequence>
<accession>O85342</accession>
<name>MANC2_ECO57</name>
<gene>
    <name type="primary">manC2</name>
    <name type="synonym">manC</name>
    <name type="ordered locus">Z3195</name>
    <name type="ordered locus">ECs2836</name>
</gene>
<evidence type="ECO:0000269" key="1">
    <source>
    </source>
</evidence>
<evidence type="ECO:0000305" key="2"/>
<feature type="chain" id="PRO_0000194254" description="Mannose-1-phosphate guanylyltransferase 2">
    <location>
        <begin position="1"/>
        <end position="482"/>
    </location>
</feature>
<comment type="function">
    <text evidence="1">Involved in GDP-mannose biosynthesis which serves as the activated sugar nucleotide precursor for mannose residues in cell surface polysaccharides. This enzyme participates in synthesis of the LPS O antigen.</text>
</comment>
<comment type="catalytic activity">
    <reaction>
        <text>alpha-D-mannose 1-phosphate + GTP + H(+) = GDP-alpha-D-mannose + diphosphate</text>
        <dbReference type="Rhea" id="RHEA:15229"/>
        <dbReference type="ChEBI" id="CHEBI:15378"/>
        <dbReference type="ChEBI" id="CHEBI:33019"/>
        <dbReference type="ChEBI" id="CHEBI:37565"/>
        <dbReference type="ChEBI" id="CHEBI:57527"/>
        <dbReference type="ChEBI" id="CHEBI:58409"/>
        <dbReference type="EC" id="2.7.7.13"/>
    </reaction>
</comment>
<comment type="pathway">
    <text>Nucleotide-sugar biosynthesis; GDP-alpha-D-mannose biosynthesis; GDP-alpha-D-mannose from alpha-D-mannose 1-phosphate (GTP route): step 1/1.</text>
</comment>
<comment type="similarity">
    <text evidence="2">Belongs to the mannose-6-phosphate isomerase type 2 family.</text>
</comment>
<keyword id="KW-0342">GTP-binding</keyword>
<keyword id="KW-0448">Lipopolysaccharide biosynthesis</keyword>
<keyword id="KW-0547">Nucleotide-binding</keyword>
<keyword id="KW-0548">Nucleotidyltransferase</keyword>
<keyword id="KW-1185">Reference proteome</keyword>
<keyword id="KW-0808">Transferase</keyword>
<proteinExistence type="inferred from homology"/>